<feature type="chain" id="PRO_0000213478" description="Uncharacterized protein ZC262.1">
    <location>
        <begin position="1"/>
        <end position="131"/>
    </location>
</feature>
<feature type="domain" description="MSP" evidence="1">
    <location>
        <begin position="14"/>
        <end position="130"/>
    </location>
</feature>
<accession>P34593</accession>
<dbReference type="EMBL" id="FO081113">
    <property type="protein sequence ID" value="CCD69200.1"/>
    <property type="molecule type" value="Genomic_DNA"/>
</dbReference>
<dbReference type="PIR" id="S44880">
    <property type="entry name" value="S44880"/>
</dbReference>
<dbReference type="RefSeq" id="NP_498838.2">
    <property type="nucleotide sequence ID" value="NM_066437.2"/>
</dbReference>
<dbReference type="SMR" id="P34593"/>
<dbReference type="STRING" id="6239.ZC262.1.1"/>
<dbReference type="PaxDb" id="6239-ZC262.1"/>
<dbReference type="UCSC" id="ZC262.1">
    <property type="organism name" value="c. elegans"/>
</dbReference>
<dbReference type="WormBase" id="ZC262.1">
    <property type="protein sequence ID" value="CE00349"/>
    <property type="gene ID" value="WBGene00022578"/>
</dbReference>
<dbReference type="eggNOG" id="KOG0439">
    <property type="taxonomic scope" value="Eukaryota"/>
</dbReference>
<dbReference type="HOGENOM" id="CLU_092913_2_1_1"/>
<dbReference type="InParanoid" id="P34593"/>
<dbReference type="OMA" id="LEVEFKC"/>
<dbReference type="PhylomeDB" id="P34593"/>
<dbReference type="PRO" id="PR:P34593"/>
<dbReference type="Proteomes" id="UP000001940">
    <property type="component" value="Chromosome III"/>
</dbReference>
<dbReference type="Bgee" id="WBGene00022578">
    <property type="expression patterns" value="Expressed in adult organism and 1 other cell type or tissue"/>
</dbReference>
<dbReference type="Gene3D" id="2.60.40.10">
    <property type="entry name" value="Immunoglobulins"/>
    <property type="match status" value="1"/>
</dbReference>
<dbReference type="InterPro" id="IPR013783">
    <property type="entry name" value="Ig-like_fold"/>
</dbReference>
<dbReference type="InterPro" id="IPR000535">
    <property type="entry name" value="MSP_dom"/>
</dbReference>
<dbReference type="InterPro" id="IPR008962">
    <property type="entry name" value="PapD-like_sf"/>
</dbReference>
<dbReference type="PANTHER" id="PTHR21513">
    <property type="entry name" value="MAJOR SPERM PROTEIN"/>
    <property type="match status" value="1"/>
</dbReference>
<dbReference type="PANTHER" id="PTHR21513:SF2">
    <property type="entry name" value="MAJOR SPERM PROTEIN"/>
    <property type="match status" value="1"/>
</dbReference>
<dbReference type="Pfam" id="PF00635">
    <property type="entry name" value="Motile_Sperm"/>
    <property type="match status" value="1"/>
</dbReference>
<dbReference type="SUPFAM" id="SSF49354">
    <property type="entry name" value="PapD-like"/>
    <property type="match status" value="1"/>
</dbReference>
<dbReference type="PROSITE" id="PS50202">
    <property type="entry name" value="MSP"/>
    <property type="match status" value="1"/>
</dbReference>
<name>YOD1_CAEEL</name>
<reference key="1">
    <citation type="journal article" date="1994" name="Nature">
        <title>2.2 Mb of contiguous nucleotide sequence from chromosome III of C. elegans.</title>
        <authorList>
            <person name="Wilson R."/>
            <person name="Ainscough R."/>
            <person name="Anderson K."/>
            <person name="Baynes C."/>
            <person name="Berks M."/>
            <person name="Bonfield J."/>
            <person name="Burton J."/>
            <person name="Connell M."/>
            <person name="Copsey T."/>
            <person name="Cooper J."/>
            <person name="Coulson A."/>
            <person name="Craxton M."/>
            <person name="Dear S."/>
            <person name="Du Z."/>
            <person name="Durbin R."/>
            <person name="Favello A."/>
            <person name="Fraser A."/>
            <person name="Fulton L."/>
            <person name="Gardner A."/>
            <person name="Green P."/>
            <person name="Hawkins T."/>
            <person name="Hillier L."/>
            <person name="Jier M."/>
            <person name="Johnston L."/>
            <person name="Jones M."/>
            <person name="Kershaw J."/>
            <person name="Kirsten J."/>
            <person name="Laisster N."/>
            <person name="Latreille P."/>
            <person name="Lightning J."/>
            <person name="Lloyd C."/>
            <person name="Mortimore B."/>
            <person name="O'Callaghan M."/>
            <person name="Parsons J."/>
            <person name="Percy C."/>
            <person name="Rifken L."/>
            <person name="Roopra A."/>
            <person name="Saunders D."/>
            <person name="Shownkeen R."/>
            <person name="Sims M."/>
            <person name="Smaldon N."/>
            <person name="Smith A."/>
            <person name="Smith M."/>
            <person name="Sonnhammer E."/>
            <person name="Staden R."/>
            <person name="Sulston J."/>
            <person name="Thierry-Mieg J."/>
            <person name="Thomas K."/>
            <person name="Vaudin M."/>
            <person name="Vaughan K."/>
            <person name="Waterston R."/>
            <person name="Watson A."/>
            <person name="Weinstock L."/>
            <person name="Wilkinson-Sproat J."/>
            <person name="Wohldman P."/>
        </authorList>
    </citation>
    <scope>NUCLEOTIDE SEQUENCE [LARGE SCALE GENOMIC DNA]</scope>
    <source>
        <strain>Bristol N2</strain>
    </source>
</reference>
<reference key="2">
    <citation type="journal article" date="1998" name="Science">
        <title>Genome sequence of the nematode C. elegans: a platform for investigating biology.</title>
        <authorList>
            <consortium name="The C. elegans sequencing consortium"/>
        </authorList>
    </citation>
    <scope>NUCLEOTIDE SEQUENCE [LARGE SCALE GENOMIC DNA]</scope>
    <source>
        <strain>Bristol N2</strain>
    </source>
</reference>
<evidence type="ECO:0000255" key="1">
    <source>
        <dbReference type="PROSITE-ProRule" id="PRU00132"/>
    </source>
</evidence>
<protein>
    <recommendedName>
        <fullName>Uncharacterized protein ZC262.1</fullName>
    </recommendedName>
</protein>
<organism>
    <name type="scientific">Caenorhabditis elegans</name>
    <dbReference type="NCBI Taxonomy" id="6239"/>
    <lineage>
        <taxon>Eukaryota</taxon>
        <taxon>Metazoa</taxon>
        <taxon>Ecdysozoa</taxon>
        <taxon>Nematoda</taxon>
        <taxon>Chromadorea</taxon>
        <taxon>Rhabditida</taxon>
        <taxon>Rhabditina</taxon>
        <taxon>Rhabditomorpha</taxon>
        <taxon>Rhabditoidea</taxon>
        <taxon>Rhabditidae</taxon>
        <taxon>Peloderinae</taxon>
        <taxon>Caenorhabditis</taxon>
    </lineage>
</organism>
<proteinExistence type="predicted"/>
<gene>
    <name type="ORF">ZC262.1</name>
</gene>
<sequence>MTVKLLFQLFQLYFLLIYSSLEVEFKCTEDRKPISVNLKLHNPTAVTVSYKVRCTSADIFRVQPPLGFVKPSETVSIVIWYQNQDKKDAISKNHYFAFYHTNSDGRTARELWANSKVEGVRRLPASFLSTK</sequence>
<keyword id="KW-1185">Reference proteome</keyword>